<name>RK33_HELAN</name>
<evidence type="ECO:0000255" key="1">
    <source>
        <dbReference type="HAMAP-Rule" id="MF_00294"/>
    </source>
</evidence>
<evidence type="ECO:0000305" key="2"/>
<keyword id="KW-0150">Chloroplast</keyword>
<keyword id="KW-0934">Plastid</keyword>
<keyword id="KW-0687">Ribonucleoprotein</keyword>
<keyword id="KW-0689">Ribosomal protein</keyword>
<sequence length="66" mass="7588">MAKGKDARIPVLLECTACVRNGVNKESTGISRYITQKNRHNTPNRLELLKFCPYCYKHTIHGEIKK</sequence>
<comment type="subcellular location">
    <subcellularLocation>
        <location>Plastid</location>
        <location>Chloroplast</location>
    </subcellularLocation>
</comment>
<comment type="similarity">
    <text evidence="1">Belongs to the bacterial ribosomal protein bL33 family.</text>
</comment>
<accession>Q1KXT8</accession>
<feature type="chain" id="PRO_0000276505" description="Large ribosomal subunit protein bL33c">
    <location>
        <begin position="1"/>
        <end position="66"/>
    </location>
</feature>
<gene>
    <name evidence="1" type="primary">rpl33</name>
</gene>
<proteinExistence type="inferred from homology"/>
<organism>
    <name type="scientific">Helianthus annuus</name>
    <name type="common">Common sunflower</name>
    <dbReference type="NCBI Taxonomy" id="4232"/>
    <lineage>
        <taxon>Eukaryota</taxon>
        <taxon>Viridiplantae</taxon>
        <taxon>Streptophyta</taxon>
        <taxon>Embryophyta</taxon>
        <taxon>Tracheophyta</taxon>
        <taxon>Spermatophyta</taxon>
        <taxon>Magnoliopsida</taxon>
        <taxon>eudicotyledons</taxon>
        <taxon>Gunneridae</taxon>
        <taxon>Pentapetalae</taxon>
        <taxon>asterids</taxon>
        <taxon>campanulids</taxon>
        <taxon>Asterales</taxon>
        <taxon>Asteraceae</taxon>
        <taxon>Asteroideae</taxon>
        <taxon>Heliantheae alliance</taxon>
        <taxon>Heliantheae</taxon>
        <taxon>Helianthus</taxon>
    </lineage>
</organism>
<geneLocation type="chloroplast"/>
<reference key="1">
    <citation type="submission" date="2006-01" db="EMBL/GenBank/DDBJ databases">
        <title>A comparison of the first two published chloroplast genomes in Asteraceae: Lactuca and Helianthus.</title>
        <authorList>
            <person name="Timme R.E."/>
            <person name="Kuehl J.V."/>
            <person name="Boore J.L."/>
            <person name="Jansen R.K."/>
        </authorList>
    </citation>
    <scope>NUCLEOTIDE SEQUENCE [LARGE SCALE GENOMIC DNA]</scope>
    <source>
        <strain>cv. HA383</strain>
    </source>
</reference>
<protein>
    <recommendedName>
        <fullName evidence="1">Large ribosomal subunit protein bL33c</fullName>
    </recommendedName>
    <alternativeName>
        <fullName evidence="2">50S ribosomal protein L33, chloroplastic</fullName>
    </alternativeName>
</protein>
<dbReference type="EMBL" id="DQ383815">
    <property type="protein sequence ID" value="ABD47167.1"/>
    <property type="molecule type" value="Genomic_DNA"/>
</dbReference>
<dbReference type="RefSeq" id="YP_588138.1">
    <property type="nucleotide sequence ID" value="NC_007977.1"/>
</dbReference>
<dbReference type="EnsemblPlants" id="mRNA:HanXRQr2_Chr11g0496361">
    <property type="protein sequence ID" value="CDS:HanXRQr2_Chr11g0496361.1"/>
    <property type="gene ID" value="HanXRQr2_Chr11g0496361"/>
</dbReference>
<dbReference type="GeneID" id="4055677"/>
<dbReference type="Gramene" id="mRNA:HanXRQr2_Chr11g0496361">
    <property type="protein sequence ID" value="CDS:HanXRQr2_Chr11g0496361.1"/>
    <property type="gene ID" value="HanXRQr2_Chr11g0496361"/>
</dbReference>
<dbReference type="KEGG" id="han:4055677"/>
<dbReference type="OrthoDB" id="361870at2759"/>
<dbReference type="GO" id="GO:0009507">
    <property type="term" value="C:chloroplast"/>
    <property type="evidence" value="ECO:0007669"/>
    <property type="project" value="UniProtKB-SubCell"/>
</dbReference>
<dbReference type="GO" id="GO:1990904">
    <property type="term" value="C:ribonucleoprotein complex"/>
    <property type="evidence" value="ECO:0007669"/>
    <property type="project" value="UniProtKB-KW"/>
</dbReference>
<dbReference type="GO" id="GO:0005840">
    <property type="term" value="C:ribosome"/>
    <property type="evidence" value="ECO:0007669"/>
    <property type="project" value="UniProtKB-KW"/>
</dbReference>
<dbReference type="GO" id="GO:0003735">
    <property type="term" value="F:structural constituent of ribosome"/>
    <property type="evidence" value="ECO:0007669"/>
    <property type="project" value="InterPro"/>
</dbReference>
<dbReference type="GO" id="GO:0006412">
    <property type="term" value="P:translation"/>
    <property type="evidence" value="ECO:0007669"/>
    <property type="project" value="UniProtKB-UniRule"/>
</dbReference>
<dbReference type="Gene3D" id="2.20.28.120">
    <property type="entry name" value="Ribosomal protein L33"/>
    <property type="match status" value="1"/>
</dbReference>
<dbReference type="HAMAP" id="MF_00294">
    <property type="entry name" value="Ribosomal_bL33"/>
    <property type="match status" value="1"/>
</dbReference>
<dbReference type="InterPro" id="IPR001705">
    <property type="entry name" value="Ribosomal_bL33"/>
</dbReference>
<dbReference type="InterPro" id="IPR018264">
    <property type="entry name" value="Ribosomal_bL33_CS"/>
</dbReference>
<dbReference type="InterPro" id="IPR038584">
    <property type="entry name" value="Ribosomal_bL33_sf"/>
</dbReference>
<dbReference type="InterPro" id="IPR011332">
    <property type="entry name" value="Ribosomal_zn-bd"/>
</dbReference>
<dbReference type="NCBIfam" id="NF001764">
    <property type="entry name" value="PRK00504.1"/>
    <property type="match status" value="1"/>
</dbReference>
<dbReference type="NCBIfam" id="NF001860">
    <property type="entry name" value="PRK00595.1"/>
    <property type="match status" value="1"/>
</dbReference>
<dbReference type="NCBIfam" id="TIGR01023">
    <property type="entry name" value="rpmG_bact"/>
    <property type="match status" value="1"/>
</dbReference>
<dbReference type="PANTHER" id="PTHR43168">
    <property type="entry name" value="50S RIBOSOMAL PROTEIN L33, CHLOROPLASTIC"/>
    <property type="match status" value="1"/>
</dbReference>
<dbReference type="PANTHER" id="PTHR43168:SF2">
    <property type="entry name" value="LARGE RIBOSOMAL SUBUNIT PROTEIN BL33C"/>
    <property type="match status" value="1"/>
</dbReference>
<dbReference type="Pfam" id="PF00471">
    <property type="entry name" value="Ribosomal_L33"/>
    <property type="match status" value="1"/>
</dbReference>
<dbReference type="SUPFAM" id="SSF57829">
    <property type="entry name" value="Zn-binding ribosomal proteins"/>
    <property type="match status" value="1"/>
</dbReference>
<dbReference type="PROSITE" id="PS00582">
    <property type="entry name" value="RIBOSOMAL_L33"/>
    <property type="match status" value="1"/>
</dbReference>